<keyword id="KW-0030">Aminoacyl-tRNA synthetase</keyword>
<keyword id="KW-0067">ATP-binding</keyword>
<keyword id="KW-0963">Cytoplasm</keyword>
<keyword id="KW-0436">Ligase</keyword>
<keyword id="KW-0547">Nucleotide-binding</keyword>
<keyword id="KW-0648">Protein biosynthesis</keyword>
<keyword id="KW-1185">Reference proteome</keyword>
<evidence type="ECO:0000255" key="1">
    <source>
        <dbReference type="HAMAP-Rule" id="MF_00044"/>
    </source>
</evidence>
<name>SYD_STRP2</name>
<sequence>MKRSMYAGRVREEHIGQEITLKGWVGRRRDLGGLIFIDLRDREGIMQLVINPEKVSAEVMATAESLRSEFVIEVTGQVAAREQANDKLPTGAVELNVTALIVLNTAKTTPFEIKDGIEANDDTRLRYRYLDLRRPEMLENLKLRAKVTHSIRNYLDELEFIDVETPFLSKSTPEGARDYLVPSRVNKGHFYALPQSPQITKQLLMNAGFDRYYQIVKCFRDEDLRGDRQPEFTQVDLETSFLTEQEIQDITEGLIARVMKETKDIEVTLPFPRMKYDDAMALYGSDKPDTRFDMLLQDLTEVVKGVDFKVFSEALAVKAIVVKGAADNYSRKDIDKMTEVAKQYGAKGLAWVKVVDGELNGPVAKFLTGIQEELTTALALEDKDLVLFVADTLEVANATLGALRGRIAKELGLIDNDKFNFLWVVDWPMFEWSEEEGRYMSAHHPFTLPQEETAHELEGDLAKVRAIAYDIVLNGYELGGGSLRINQKDLQERMFKALGFSAEEANDQFGFLLEAMDYGFPPHGGLAIGLDRFVMLLAGEENIREVIAFPKNNKATDPMTQAPSTVALKQLEELSLQVEEDETSKTN</sequence>
<proteinExistence type="inferred from homology"/>
<dbReference type="EC" id="6.1.1.12" evidence="1"/>
<dbReference type="EMBL" id="CP000410">
    <property type="protein sequence ID" value="ABJ54433.1"/>
    <property type="molecule type" value="Genomic_DNA"/>
</dbReference>
<dbReference type="RefSeq" id="WP_000830872.1">
    <property type="nucleotide sequence ID" value="NZ_JAMLJR010000012.1"/>
</dbReference>
<dbReference type="SMR" id="Q04I59"/>
<dbReference type="PaxDb" id="373153-SPD_1941"/>
<dbReference type="KEGG" id="spd:SPD_1941"/>
<dbReference type="eggNOG" id="COG0173">
    <property type="taxonomic scope" value="Bacteria"/>
</dbReference>
<dbReference type="HOGENOM" id="CLU_014330_3_2_9"/>
<dbReference type="BioCyc" id="SPNE373153:G1G6V-2086-MONOMER"/>
<dbReference type="Proteomes" id="UP000001452">
    <property type="component" value="Chromosome"/>
</dbReference>
<dbReference type="GO" id="GO:0005737">
    <property type="term" value="C:cytoplasm"/>
    <property type="evidence" value="ECO:0007669"/>
    <property type="project" value="UniProtKB-SubCell"/>
</dbReference>
<dbReference type="GO" id="GO:0004815">
    <property type="term" value="F:aspartate-tRNA ligase activity"/>
    <property type="evidence" value="ECO:0007669"/>
    <property type="project" value="UniProtKB-UniRule"/>
</dbReference>
<dbReference type="GO" id="GO:0005524">
    <property type="term" value="F:ATP binding"/>
    <property type="evidence" value="ECO:0007669"/>
    <property type="project" value="UniProtKB-UniRule"/>
</dbReference>
<dbReference type="GO" id="GO:0140096">
    <property type="term" value="F:catalytic activity, acting on a protein"/>
    <property type="evidence" value="ECO:0007669"/>
    <property type="project" value="UniProtKB-ARBA"/>
</dbReference>
<dbReference type="GO" id="GO:0003676">
    <property type="term" value="F:nucleic acid binding"/>
    <property type="evidence" value="ECO:0007669"/>
    <property type="project" value="InterPro"/>
</dbReference>
<dbReference type="GO" id="GO:0016740">
    <property type="term" value="F:transferase activity"/>
    <property type="evidence" value="ECO:0007669"/>
    <property type="project" value="UniProtKB-ARBA"/>
</dbReference>
<dbReference type="GO" id="GO:0006422">
    <property type="term" value="P:aspartyl-tRNA aminoacylation"/>
    <property type="evidence" value="ECO:0007669"/>
    <property type="project" value="UniProtKB-UniRule"/>
</dbReference>
<dbReference type="CDD" id="cd00777">
    <property type="entry name" value="AspRS_core"/>
    <property type="match status" value="1"/>
</dbReference>
<dbReference type="CDD" id="cd04317">
    <property type="entry name" value="EcAspRS_like_N"/>
    <property type="match status" value="1"/>
</dbReference>
<dbReference type="Gene3D" id="3.30.930.10">
    <property type="entry name" value="Bira Bifunctional Protein, Domain 2"/>
    <property type="match status" value="1"/>
</dbReference>
<dbReference type="Gene3D" id="3.30.1360.30">
    <property type="entry name" value="GAD-like domain"/>
    <property type="match status" value="1"/>
</dbReference>
<dbReference type="Gene3D" id="2.40.50.140">
    <property type="entry name" value="Nucleic acid-binding proteins"/>
    <property type="match status" value="1"/>
</dbReference>
<dbReference type="HAMAP" id="MF_00044">
    <property type="entry name" value="Asp_tRNA_synth_type1"/>
    <property type="match status" value="1"/>
</dbReference>
<dbReference type="InterPro" id="IPR004364">
    <property type="entry name" value="Aa-tRNA-synt_II"/>
</dbReference>
<dbReference type="InterPro" id="IPR006195">
    <property type="entry name" value="aa-tRNA-synth_II"/>
</dbReference>
<dbReference type="InterPro" id="IPR045864">
    <property type="entry name" value="aa-tRNA-synth_II/BPL/LPL"/>
</dbReference>
<dbReference type="InterPro" id="IPR004524">
    <property type="entry name" value="Asp-tRNA-ligase_1"/>
</dbReference>
<dbReference type="InterPro" id="IPR047089">
    <property type="entry name" value="Asp-tRNA-ligase_1_N"/>
</dbReference>
<dbReference type="InterPro" id="IPR002312">
    <property type="entry name" value="Asp/Asn-tRNA-synth_IIb"/>
</dbReference>
<dbReference type="InterPro" id="IPR047090">
    <property type="entry name" value="AspRS_core"/>
</dbReference>
<dbReference type="InterPro" id="IPR004115">
    <property type="entry name" value="GAD-like_sf"/>
</dbReference>
<dbReference type="InterPro" id="IPR029351">
    <property type="entry name" value="GAD_dom"/>
</dbReference>
<dbReference type="InterPro" id="IPR012340">
    <property type="entry name" value="NA-bd_OB-fold"/>
</dbReference>
<dbReference type="InterPro" id="IPR004365">
    <property type="entry name" value="NA-bd_OB_tRNA"/>
</dbReference>
<dbReference type="NCBIfam" id="TIGR00459">
    <property type="entry name" value="aspS_bact"/>
    <property type="match status" value="1"/>
</dbReference>
<dbReference type="NCBIfam" id="NF001750">
    <property type="entry name" value="PRK00476.1"/>
    <property type="match status" value="1"/>
</dbReference>
<dbReference type="PANTHER" id="PTHR22594:SF5">
    <property type="entry name" value="ASPARTATE--TRNA LIGASE, MITOCHONDRIAL"/>
    <property type="match status" value="1"/>
</dbReference>
<dbReference type="PANTHER" id="PTHR22594">
    <property type="entry name" value="ASPARTYL/LYSYL-TRNA SYNTHETASE"/>
    <property type="match status" value="1"/>
</dbReference>
<dbReference type="Pfam" id="PF02938">
    <property type="entry name" value="GAD"/>
    <property type="match status" value="1"/>
</dbReference>
<dbReference type="Pfam" id="PF00152">
    <property type="entry name" value="tRNA-synt_2"/>
    <property type="match status" value="1"/>
</dbReference>
<dbReference type="Pfam" id="PF01336">
    <property type="entry name" value="tRNA_anti-codon"/>
    <property type="match status" value="1"/>
</dbReference>
<dbReference type="PRINTS" id="PR01042">
    <property type="entry name" value="TRNASYNTHASP"/>
</dbReference>
<dbReference type="SUPFAM" id="SSF55681">
    <property type="entry name" value="Class II aaRS and biotin synthetases"/>
    <property type="match status" value="1"/>
</dbReference>
<dbReference type="SUPFAM" id="SSF55261">
    <property type="entry name" value="GAD domain-like"/>
    <property type="match status" value="1"/>
</dbReference>
<dbReference type="SUPFAM" id="SSF50249">
    <property type="entry name" value="Nucleic acid-binding proteins"/>
    <property type="match status" value="1"/>
</dbReference>
<dbReference type="PROSITE" id="PS50862">
    <property type="entry name" value="AA_TRNA_LIGASE_II"/>
    <property type="match status" value="1"/>
</dbReference>
<accession>Q04I59</accession>
<gene>
    <name evidence="1" type="primary">aspS</name>
    <name type="ordered locus">SPD_1941</name>
</gene>
<feature type="chain" id="PRO_1000006768" description="Aspartate--tRNA ligase">
    <location>
        <begin position="1"/>
        <end position="587"/>
    </location>
</feature>
<feature type="region of interest" description="Aspartate" evidence="1">
    <location>
        <begin position="198"/>
        <end position="201"/>
    </location>
</feature>
<feature type="binding site" evidence="1">
    <location>
        <position position="174"/>
    </location>
    <ligand>
        <name>L-aspartate</name>
        <dbReference type="ChEBI" id="CHEBI:29991"/>
    </ligand>
</feature>
<feature type="binding site" evidence="1">
    <location>
        <begin position="220"/>
        <end position="222"/>
    </location>
    <ligand>
        <name>ATP</name>
        <dbReference type="ChEBI" id="CHEBI:30616"/>
    </ligand>
</feature>
<feature type="binding site" evidence="1">
    <location>
        <position position="220"/>
    </location>
    <ligand>
        <name>L-aspartate</name>
        <dbReference type="ChEBI" id="CHEBI:29991"/>
    </ligand>
</feature>
<feature type="binding site" evidence="1">
    <location>
        <position position="229"/>
    </location>
    <ligand>
        <name>ATP</name>
        <dbReference type="ChEBI" id="CHEBI:30616"/>
    </ligand>
</feature>
<feature type="binding site" evidence="1">
    <location>
        <position position="443"/>
    </location>
    <ligand>
        <name>L-aspartate</name>
        <dbReference type="ChEBI" id="CHEBI:29991"/>
    </ligand>
</feature>
<feature type="binding site" evidence="1">
    <location>
        <position position="477"/>
    </location>
    <ligand>
        <name>ATP</name>
        <dbReference type="ChEBI" id="CHEBI:30616"/>
    </ligand>
</feature>
<feature type="binding site" evidence="1">
    <location>
        <position position="484"/>
    </location>
    <ligand>
        <name>L-aspartate</name>
        <dbReference type="ChEBI" id="CHEBI:29991"/>
    </ligand>
</feature>
<feature type="binding site" evidence="1">
    <location>
        <begin position="529"/>
        <end position="532"/>
    </location>
    <ligand>
        <name>ATP</name>
        <dbReference type="ChEBI" id="CHEBI:30616"/>
    </ligand>
</feature>
<protein>
    <recommendedName>
        <fullName evidence="1">Aspartate--tRNA ligase</fullName>
        <ecNumber evidence="1">6.1.1.12</ecNumber>
    </recommendedName>
    <alternativeName>
        <fullName evidence="1">Aspartyl-tRNA synthetase</fullName>
        <shortName evidence="1">AspRS</shortName>
    </alternativeName>
</protein>
<reference key="1">
    <citation type="journal article" date="2007" name="J. Bacteriol.">
        <title>Genome sequence of Avery's virulent serotype 2 strain D39 of Streptococcus pneumoniae and comparison with that of unencapsulated laboratory strain R6.</title>
        <authorList>
            <person name="Lanie J.A."/>
            <person name="Ng W.-L."/>
            <person name="Kazmierczak K.M."/>
            <person name="Andrzejewski T.M."/>
            <person name="Davidsen T.M."/>
            <person name="Wayne K.J."/>
            <person name="Tettelin H."/>
            <person name="Glass J.I."/>
            <person name="Winkler M.E."/>
        </authorList>
    </citation>
    <scope>NUCLEOTIDE SEQUENCE [LARGE SCALE GENOMIC DNA]</scope>
    <source>
        <strain>D39 / NCTC 7466</strain>
    </source>
</reference>
<organism>
    <name type="scientific">Streptococcus pneumoniae serotype 2 (strain D39 / NCTC 7466)</name>
    <dbReference type="NCBI Taxonomy" id="373153"/>
    <lineage>
        <taxon>Bacteria</taxon>
        <taxon>Bacillati</taxon>
        <taxon>Bacillota</taxon>
        <taxon>Bacilli</taxon>
        <taxon>Lactobacillales</taxon>
        <taxon>Streptococcaceae</taxon>
        <taxon>Streptococcus</taxon>
    </lineage>
</organism>
<comment type="function">
    <text evidence="1">Catalyzes the attachment of L-aspartate to tRNA(Asp) in a two-step reaction: L-aspartate is first activated by ATP to form Asp-AMP and then transferred to the acceptor end of tRNA(Asp).</text>
</comment>
<comment type="catalytic activity">
    <reaction evidence="1">
        <text>tRNA(Asp) + L-aspartate + ATP = L-aspartyl-tRNA(Asp) + AMP + diphosphate</text>
        <dbReference type="Rhea" id="RHEA:19649"/>
        <dbReference type="Rhea" id="RHEA-COMP:9660"/>
        <dbReference type="Rhea" id="RHEA-COMP:9678"/>
        <dbReference type="ChEBI" id="CHEBI:29991"/>
        <dbReference type="ChEBI" id="CHEBI:30616"/>
        <dbReference type="ChEBI" id="CHEBI:33019"/>
        <dbReference type="ChEBI" id="CHEBI:78442"/>
        <dbReference type="ChEBI" id="CHEBI:78516"/>
        <dbReference type="ChEBI" id="CHEBI:456215"/>
        <dbReference type="EC" id="6.1.1.12"/>
    </reaction>
</comment>
<comment type="subunit">
    <text evidence="1">Homodimer.</text>
</comment>
<comment type="subcellular location">
    <subcellularLocation>
        <location evidence="1">Cytoplasm</location>
    </subcellularLocation>
</comment>
<comment type="similarity">
    <text evidence="1">Belongs to the class-II aminoacyl-tRNA synthetase family. Type 1 subfamily.</text>
</comment>